<keyword id="KW-0012">Acyltransferase</keyword>
<keyword id="KW-0963">Cytoplasm</keyword>
<keyword id="KW-1185">Reference proteome</keyword>
<keyword id="KW-0808">Transferase</keyword>
<gene>
    <name evidence="1" type="primary">bpt</name>
    <name type="ordered locus">Sala_0342</name>
</gene>
<name>BPT_SPHAL</name>
<protein>
    <recommendedName>
        <fullName evidence="1">Aspartate/glutamate leucyltransferase</fullName>
        <ecNumber evidence="1">2.3.2.29</ecNumber>
    </recommendedName>
</protein>
<comment type="function">
    <text evidence="1">Functions in the N-end rule pathway of protein degradation where it conjugates Leu from its aminoacyl-tRNA to the N-termini of proteins containing an N-terminal aspartate or glutamate.</text>
</comment>
<comment type="catalytic activity">
    <reaction evidence="1">
        <text>N-terminal L-glutamyl-[protein] + L-leucyl-tRNA(Leu) = N-terminal L-leucyl-L-glutamyl-[protein] + tRNA(Leu) + H(+)</text>
        <dbReference type="Rhea" id="RHEA:50412"/>
        <dbReference type="Rhea" id="RHEA-COMP:9613"/>
        <dbReference type="Rhea" id="RHEA-COMP:9622"/>
        <dbReference type="Rhea" id="RHEA-COMP:12664"/>
        <dbReference type="Rhea" id="RHEA-COMP:12668"/>
        <dbReference type="ChEBI" id="CHEBI:15378"/>
        <dbReference type="ChEBI" id="CHEBI:64721"/>
        <dbReference type="ChEBI" id="CHEBI:78442"/>
        <dbReference type="ChEBI" id="CHEBI:78494"/>
        <dbReference type="ChEBI" id="CHEBI:133041"/>
        <dbReference type="EC" id="2.3.2.29"/>
    </reaction>
</comment>
<comment type="catalytic activity">
    <reaction evidence="1">
        <text>N-terminal L-aspartyl-[protein] + L-leucyl-tRNA(Leu) = N-terminal L-leucyl-L-aspartyl-[protein] + tRNA(Leu) + H(+)</text>
        <dbReference type="Rhea" id="RHEA:50420"/>
        <dbReference type="Rhea" id="RHEA-COMP:9613"/>
        <dbReference type="Rhea" id="RHEA-COMP:9622"/>
        <dbReference type="Rhea" id="RHEA-COMP:12669"/>
        <dbReference type="Rhea" id="RHEA-COMP:12674"/>
        <dbReference type="ChEBI" id="CHEBI:15378"/>
        <dbReference type="ChEBI" id="CHEBI:64720"/>
        <dbReference type="ChEBI" id="CHEBI:78442"/>
        <dbReference type="ChEBI" id="CHEBI:78494"/>
        <dbReference type="ChEBI" id="CHEBI:133042"/>
        <dbReference type="EC" id="2.3.2.29"/>
    </reaction>
</comment>
<comment type="subcellular location">
    <subcellularLocation>
        <location evidence="1">Cytoplasm</location>
    </subcellularLocation>
</comment>
<comment type="similarity">
    <text evidence="1">Belongs to the R-transferase family. Bpt subfamily.</text>
</comment>
<feature type="chain" id="PRO_0000263220" description="Aspartate/glutamate leucyltransferase">
    <location>
        <begin position="1"/>
        <end position="257"/>
    </location>
</feature>
<evidence type="ECO:0000255" key="1">
    <source>
        <dbReference type="HAMAP-Rule" id="MF_00689"/>
    </source>
</evidence>
<organism>
    <name type="scientific">Sphingopyxis alaskensis (strain DSM 13593 / LMG 18877 / RB2256)</name>
    <name type="common">Sphingomonas alaskensis</name>
    <dbReference type="NCBI Taxonomy" id="317655"/>
    <lineage>
        <taxon>Bacteria</taxon>
        <taxon>Pseudomonadati</taxon>
        <taxon>Pseudomonadota</taxon>
        <taxon>Alphaproteobacteria</taxon>
        <taxon>Sphingomonadales</taxon>
        <taxon>Sphingomonadaceae</taxon>
        <taxon>Sphingopyxis</taxon>
    </lineage>
</organism>
<dbReference type="EC" id="2.3.2.29" evidence="1"/>
<dbReference type="EMBL" id="CP000356">
    <property type="protein sequence ID" value="ABF52065.1"/>
    <property type="molecule type" value="Genomic_DNA"/>
</dbReference>
<dbReference type="RefSeq" id="WP_011540656.1">
    <property type="nucleotide sequence ID" value="NC_008048.1"/>
</dbReference>
<dbReference type="SMR" id="Q1GWA7"/>
<dbReference type="STRING" id="317655.Sala_0342"/>
<dbReference type="KEGG" id="sal:Sala_0342"/>
<dbReference type="eggNOG" id="COG2935">
    <property type="taxonomic scope" value="Bacteria"/>
</dbReference>
<dbReference type="HOGENOM" id="CLU_077607_1_0_5"/>
<dbReference type="OrthoDB" id="9782022at2"/>
<dbReference type="Proteomes" id="UP000006578">
    <property type="component" value="Chromosome"/>
</dbReference>
<dbReference type="GO" id="GO:0005737">
    <property type="term" value="C:cytoplasm"/>
    <property type="evidence" value="ECO:0007669"/>
    <property type="project" value="UniProtKB-SubCell"/>
</dbReference>
<dbReference type="GO" id="GO:0004057">
    <property type="term" value="F:arginyl-tRNA--protein transferase activity"/>
    <property type="evidence" value="ECO:0007669"/>
    <property type="project" value="InterPro"/>
</dbReference>
<dbReference type="GO" id="GO:0008914">
    <property type="term" value="F:leucyl-tRNA--protein transferase activity"/>
    <property type="evidence" value="ECO:0007669"/>
    <property type="project" value="UniProtKB-UniRule"/>
</dbReference>
<dbReference type="GO" id="GO:0071596">
    <property type="term" value="P:ubiquitin-dependent protein catabolic process via the N-end rule pathway"/>
    <property type="evidence" value="ECO:0007669"/>
    <property type="project" value="InterPro"/>
</dbReference>
<dbReference type="HAMAP" id="MF_00689">
    <property type="entry name" value="Bpt"/>
    <property type="match status" value="1"/>
</dbReference>
<dbReference type="InterPro" id="IPR016181">
    <property type="entry name" value="Acyl_CoA_acyltransferase"/>
</dbReference>
<dbReference type="InterPro" id="IPR017138">
    <property type="entry name" value="Asp_Glu_LeuTrfase"/>
</dbReference>
<dbReference type="InterPro" id="IPR030700">
    <property type="entry name" value="N-end_Aminoacyl_Trfase"/>
</dbReference>
<dbReference type="InterPro" id="IPR007472">
    <property type="entry name" value="N-end_Aminoacyl_Trfase_C"/>
</dbReference>
<dbReference type="InterPro" id="IPR007471">
    <property type="entry name" value="N-end_Aminoacyl_Trfase_N"/>
</dbReference>
<dbReference type="NCBIfam" id="NF002343">
    <property type="entry name" value="PRK01305.1-4"/>
    <property type="match status" value="1"/>
</dbReference>
<dbReference type="PANTHER" id="PTHR21367">
    <property type="entry name" value="ARGININE-TRNA-PROTEIN TRANSFERASE 1"/>
    <property type="match status" value="1"/>
</dbReference>
<dbReference type="PANTHER" id="PTHR21367:SF1">
    <property type="entry name" value="ARGINYL-TRNA--PROTEIN TRANSFERASE 1"/>
    <property type="match status" value="1"/>
</dbReference>
<dbReference type="Pfam" id="PF04377">
    <property type="entry name" value="ATE_C"/>
    <property type="match status" value="1"/>
</dbReference>
<dbReference type="Pfam" id="PF04376">
    <property type="entry name" value="ATE_N"/>
    <property type="match status" value="1"/>
</dbReference>
<dbReference type="PIRSF" id="PIRSF037208">
    <property type="entry name" value="ATE_pro_prd"/>
    <property type="match status" value="1"/>
</dbReference>
<dbReference type="SUPFAM" id="SSF55729">
    <property type="entry name" value="Acyl-CoA N-acyltransferases (Nat)"/>
    <property type="match status" value="1"/>
</dbReference>
<sequence>MSAPFRFPRFFVTSPAPCPYLAGRTERKVFTELSGNNATELNDALGRIGFRRSQSVAYRPSCADCSACVSVRVCASEFAPSNSQKRTLRRNGDLVVTACKPWATEEQYALLRSYLASRHPDGGMADMDEQDFADMVEQTPVDSYMIEYREPVAGGGKGRLVGCCLTDRQGDGLSMIYSFFDAHHPLREGLGTYIIADHVLRAAKAGLPYVYLGYWIEGSARMAYKARFRPLEKLGPDGWSRFEPTPSERIAAMFELA</sequence>
<accession>Q1GWA7</accession>
<proteinExistence type="inferred from homology"/>
<reference key="1">
    <citation type="journal article" date="2009" name="Proc. Natl. Acad. Sci. U.S.A.">
        <title>The genomic basis of trophic strategy in marine bacteria.</title>
        <authorList>
            <person name="Lauro F.M."/>
            <person name="McDougald D."/>
            <person name="Thomas T."/>
            <person name="Williams T.J."/>
            <person name="Egan S."/>
            <person name="Rice S."/>
            <person name="DeMaere M.Z."/>
            <person name="Ting L."/>
            <person name="Ertan H."/>
            <person name="Johnson J."/>
            <person name="Ferriera S."/>
            <person name="Lapidus A."/>
            <person name="Anderson I."/>
            <person name="Kyrpides N."/>
            <person name="Munk A.C."/>
            <person name="Detter C."/>
            <person name="Han C.S."/>
            <person name="Brown M.V."/>
            <person name="Robb F.T."/>
            <person name="Kjelleberg S."/>
            <person name="Cavicchioli R."/>
        </authorList>
    </citation>
    <scope>NUCLEOTIDE SEQUENCE [LARGE SCALE GENOMIC DNA]</scope>
    <source>
        <strain>DSM 13593 / LMG 18877 / RB2256</strain>
    </source>
</reference>